<dbReference type="EC" id="2.7.7.23" evidence="1"/>
<dbReference type="EC" id="2.3.1.157" evidence="1"/>
<dbReference type="EMBL" id="AE008692">
    <property type="protein sequence ID" value="AAV89122.2"/>
    <property type="molecule type" value="Genomic_DNA"/>
</dbReference>
<dbReference type="RefSeq" id="WP_011240403.1">
    <property type="nucleotide sequence ID" value="NZ_CP035711.1"/>
</dbReference>
<dbReference type="SMR" id="Q5NQ83"/>
<dbReference type="STRING" id="264203.ZMO0498"/>
<dbReference type="KEGG" id="zmo:ZMO0498"/>
<dbReference type="eggNOG" id="COG1207">
    <property type="taxonomic scope" value="Bacteria"/>
</dbReference>
<dbReference type="HOGENOM" id="CLU_029499_15_2_5"/>
<dbReference type="UniPathway" id="UPA00113">
    <property type="reaction ID" value="UER00532"/>
</dbReference>
<dbReference type="UniPathway" id="UPA00113">
    <property type="reaction ID" value="UER00533"/>
</dbReference>
<dbReference type="UniPathway" id="UPA00973"/>
<dbReference type="Proteomes" id="UP000001173">
    <property type="component" value="Chromosome"/>
</dbReference>
<dbReference type="GO" id="GO:0005737">
    <property type="term" value="C:cytoplasm"/>
    <property type="evidence" value="ECO:0007669"/>
    <property type="project" value="UniProtKB-SubCell"/>
</dbReference>
<dbReference type="GO" id="GO:0016020">
    <property type="term" value="C:membrane"/>
    <property type="evidence" value="ECO:0007669"/>
    <property type="project" value="GOC"/>
</dbReference>
<dbReference type="GO" id="GO:0019134">
    <property type="term" value="F:glucosamine-1-phosphate N-acetyltransferase activity"/>
    <property type="evidence" value="ECO:0007669"/>
    <property type="project" value="UniProtKB-UniRule"/>
</dbReference>
<dbReference type="GO" id="GO:0000287">
    <property type="term" value="F:magnesium ion binding"/>
    <property type="evidence" value="ECO:0007669"/>
    <property type="project" value="UniProtKB-UniRule"/>
</dbReference>
<dbReference type="GO" id="GO:0003977">
    <property type="term" value="F:UDP-N-acetylglucosamine diphosphorylase activity"/>
    <property type="evidence" value="ECO:0007669"/>
    <property type="project" value="UniProtKB-UniRule"/>
</dbReference>
<dbReference type="GO" id="GO:0000902">
    <property type="term" value="P:cell morphogenesis"/>
    <property type="evidence" value="ECO:0007669"/>
    <property type="project" value="UniProtKB-UniRule"/>
</dbReference>
<dbReference type="GO" id="GO:0071555">
    <property type="term" value="P:cell wall organization"/>
    <property type="evidence" value="ECO:0007669"/>
    <property type="project" value="UniProtKB-KW"/>
</dbReference>
<dbReference type="GO" id="GO:0009245">
    <property type="term" value="P:lipid A biosynthetic process"/>
    <property type="evidence" value="ECO:0007669"/>
    <property type="project" value="UniProtKB-UniRule"/>
</dbReference>
<dbReference type="GO" id="GO:0009252">
    <property type="term" value="P:peptidoglycan biosynthetic process"/>
    <property type="evidence" value="ECO:0007669"/>
    <property type="project" value="UniProtKB-UniRule"/>
</dbReference>
<dbReference type="GO" id="GO:0008360">
    <property type="term" value="P:regulation of cell shape"/>
    <property type="evidence" value="ECO:0007669"/>
    <property type="project" value="UniProtKB-KW"/>
</dbReference>
<dbReference type="GO" id="GO:0006048">
    <property type="term" value="P:UDP-N-acetylglucosamine biosynthetic process"/>
    <property type="evidence" value="ECO:0007669"/>
    <property type="project" value="UniProtKB-UniPathway"/>
</dbReference>
<dbReference type="CDD" id="cd02540">
    <property type="entry name" value="GT2_GlmU_N_bac"/>
    <property type="match status" value="1"/>
</dbReference>
<dbReference type="CDD" id="cd03353">
    <property type="entry name" value="LbH_GlmU_C"/>
    <property type="match status" value="1"/>
</dbReference>
<dbReference type="Gene3D" id="2.160.10.10">
    <property type="entry name" value="Hexapeptide repeat proteins"/>
    <property type="match status" value="1"/>
</dbReference>
<dbReference type="Gene3D" id="3.90.550.10">
    <property type="entry name" value="Spore Coat Polysaccharide Biosynthesis Protein SpsA, Chain A"/>
    <property type="match status" value="1"/>
</dbReference>
<dbReference type="HAMAP" id="MF_01631">
    <property type="entry name" value="GlmU"/>
    <property type="match status" value="1"/>
</dbReference>
<dbReference type="InterPro" id="IPR005882">
    <property type="entry name" value="Bifunctional_GlmU"/>
</dbReference>
<dbReference type="InterPro" id="IPR050065">
    <property type="entry name" value="GlmU-like"/>
</dbReference>
<dbReference type="InterPro" id="IPR038009">
    <property type="entry name" value="GlmU_C_LbH"/>
</dbReference>
<dbReference type="InterPro" id="IPR001451">
    <property type="entry name" value="Hexapep"/>
</dbReference>
<dbReference type="InterPro" id="IPR018357">
    <property type="entry name" value="Hexapep_transf_CS"/>
</dbReference>
<dbReference type="InterPro" id="IPR025877">
    <property type="entry name" value="MobA-like_NTP_Trfase"/>
</dbReference>
<dbReference type="InterPro" id="IPR029044">
    <property type="entry name" value="Nucleotide-diphossugar_trans"/>
</dbReference>
<dbReference type="InterPro" id="IPR011004">
    <property type="entry name" value="Trimer_LpxA-like_sf"/>
</dbReference>
<dbReference type="NCBIfam" id="TIGR01173">
    <property type="entry name" value="glmU"/>
    <property type="match status" value="1"/>
</dbReference>
<dbReference type="NCBIfam" id="NF010933">
    <property type="entry name" value="PRK14353.1"/>
    <property type="match status" value="1"/>
</dbReference>
<dbReference type="PANTHER" id="PTHR43584:SF3">
    <property type="entry name" value="BIFUNCTIONAL PROTEIN GLMU"/>
    <property type="match status" value="1"/>
</dbReference>
<dbReference type="PANTHER" id="PTHR43584">
    <property type="entry name" value="NUCLEOTIDYL TRANSFERASE"/>
    <property type="match status" value="1"/>
</dbReference>
<dbReference type="Pfam" id="PF00132">
    <property type="entry name" value="Hexapep"/>
    <property type="match status" value="2"/>
</dbReference>
<dbReference type="Pfam" id="PF12804">
    <property type="entry name" value="NTP_transf_3"/>
    <property type="match status" value="1"/>
</dbReference>
<dbReference type="SUPFAM" id="SSF53448">
    <property type="entry name" value="Nucleotide-diphospho-sugar transferases"/>
    <property type="match status" value="1"/>
</dbReference>
<dbReference type="SUPFAM" id="SSF51161">
    <property type="entry name" value="Trimeric LpxA-like enzymes"/>
    <property type="match status" value="1"/>
</dbReference>
<dbReference type="PROSITE" id="PS00101">
    <property type="entry name" value="HEXAPEP_TRANSFERASES"/>
    <property type="match status" value="1"/>
</dbReference>
<keyword id="KW-0012">Acyltransferase</keyword>
<keyword id="KW-0133">Cell shape</keyword>
<keyword id="KW-0961">Cell wall biogenesis/degradation</keyword>
<keyword id="KW-0963">Cytoplasm</keyword>
<keyword id="KW-0460">Magnesium</keyword>
<keyword id="KW-0479">Metal-binding</keyword>
<keyword id="KW-0511">Multifunctional enzyme</keyword>
<keyword id="KW-0548">Nucleotidyltransferase</keyword>
<keyword id="KW-0573">Peptidoglycan synthesis</keyword>
<keyword id="KW-1185">Reference proteome</keyword>
<keyword id="KW-0677">Repeat</keyword>
<keyword id="KW-0808">Transferase</keyword>
<accession>Q5NQ83</accession>
<comment type="function">
    <text evidence="1">Catalyzes the last two sequential reactions in the de novo biosynthetic pathway for UDP-N-acetylglucosamine (UDP-GlcNAc). The C-terminal domain catalyzes the transfer of acetyl group from acetyl coenzyme A to glucosamine-1-phosphate (GlcN-1-P) to produce N-acetylglucosamine-1-phosphate (GlcNAc-1-P), which is converted into UDP-GlcNAc by the transfer of uridine 5-monophosphate (from uridine 5-triphosphate), a reaction catalyzed by the N-terminal domain.</text>
</comment>
<comment type="catalytic activity">
    <reaction evidence="1">
        <text>alpha-D-glucosamine 1-phosphate + acetyl-CoA = N-acetyl-alpha-D-glucosamine 1-phosphate + CoA + H(+)</text>
        <dbReference type="Rhea" id="RHEA:13725"/>
        <dbReference type="ChEBI" id="CHEBI:15378"/>
        <dbReference type="ChEBI" id="CHEBI:57287"/>
        <dbReference type="ChEBI" id="CHEBI:57288"/>
        <dbReference type="ChEBI" id="CHEBI:57776"/>
        <dbReference type="ChEBI" id="CHEBI:58516"/>
        <dbReference type="EC" id="2.3.1.157"/>
    </reaction>
</comment>
<comment type="catalytic activity">
    <reaction evidence="1">
        <text>N-acetyl-alpha-D-glucosamine 1-phosphate + UTP + H(+) = UDP-N-acetyl-alpha-D-glucosamine + diphosphate</text>
        <dbReference type="Rhea" id="RHEA:13509"/>
        <dbReference type="ChEBI" id="CHEBI:15378"/>
        <dbReference type="ChEBI" id="CHEBI:33019"/>
        <dbReference type="ChEBI" id="CHEBI:46398"/>
        <dbReference type="ChEBI" id="CHEBI:57705"/>
        <dbReference type="ChEBI" id="CHEBI:57776"/>
        <dbReference type="EC" id="2.7.7.23"/>
    </reaction>
</comment>
<comment type="cofactor">
    <cofactor evidence="1">
        <name>Mg(2+)</name>
        <dbReference type="ChEBI" id="CHEBI:18420"/>
    </cofactor>
    <text evidence="1">Binds 1 Mg(2+) ion per subunit.</text>
</comment>
<comment type="pathway">
    <text evidence="1">Nucleotide-sugar biosynthesis; UDP-N-acetyl-alpha-D-glucosamine biosynthesis; N-acetyl-alpha-D-glucosamine 1-phosphate from alpha-D-glucosamine 6-phosphate (route II): step 2/2.</text>
</comment>
<comment type="pathway">
    <text evidence="1">Nucleotide-sugar biosynthesis; UDP-N-acetyl-alpha-D-glucosamine biosynthesis; UDP-N-acetyl-alpha-D-glucosamine from N-acetyl-alpha-D-glucosamine 1-phosphate: step 1/1.</text>
</comment>
<comment type="pathway">
    <text evidence="1">Bacterial outer membrane biogenesis; LPS lipid A biosynthesis.</text>
</comment>
<comment type="subunit">
    <text evidence="1">Homotrimer.</text>
</comment>
<comment type="subcellular location">
    <subcellularLocation>
        <location evidence="1">Cytoplasm</location>
    </subcellularLocation>
</comment>
<comment type="similarity">
    <text evidence="1">In the N-terminal section; belongs to the N-acetylglucosamine-1-phosphate uridyltransferase family.</text>
</comment>
<comment type="similarity">
    <text evidence="1">In the C-terminal section; belongs to the transferase hexapeptide repeat family.</text>
</comment>
<proteinExistence type="inferred from homology"/>
<gene>
    <name evidence="1" type="primary">glmU</name>
    <name type="ordered locus">ZMO0498</name>
</gene>
<feature type="chain" id="PRO_0000233890" description="Bifunctional protein GlmU">
    <location>
        <begin position="1"/>
        <end position="450"/>
    </location>
</feature>
<feature type="region of interest" description="Pyrophosphorylase" evidence="1">
    <location>
        <begin position="1"/>
        <end position="236"/>
    </location>
</feature>
<feature type="region of interest" description="Linker" evidence="1">
    <location>
        <begin position="237"/>
        <end position="257"/>
    </location>
</feature>
<feature type="region of interest" description="N-acetyltransferase" evidence="1">
    <location>
        <begin position="258"/>
        <end position="450"/>
    </location>
</feature>
<feature type="active site" description="Proton acceptor" evidence="1">
    <location>
        <position position="353"/>
    </location>
</feature>
<feature type="binding site" evidence="1">
    <location>
        <begin position="12"/>
        <end position="15"/>
    </location>
    <ligand>
        <name>UDP-N-acetyl-alpha-D-glucosamine</name>
        <dbReference type="ChEBI" id="CHEBI:57705"/>
    </ligand>
</feature>
<feature type="binding site" evidence="1">
    <location>
        <position position="26"/>
    </location>
    <ligand>
        <name>UDP-N-acetyl-alpha-D-glucosamine</name>
        <dbReference type="ChEBI" id="CHEBI:57705"/>
    </ligand>
</feature>
<feature type="binding site" evidence="1">
    <location>
        <position position="79"/>
    </location>
    <ligand>
        <name>UDP-N-acetyl-alpha-D-glucosamine</name>
        <dbReference type="ChEBI" id="CHEBI:57705"/>
    </ligand>
</feature>
<feature type="binding site" evidence="1">
    <location>
        <begin position="84"/>
        <end position="85"/>
    </location>
    <ligand>
        <name>UDP-N-acetyl-alpha-D-glucosamine</name>
        <dbReference type="ChEBI" id="CHEBI:57705"/>
    </ligand>
</feature>
<feature type="binding site" evidence="1">
    <location>
        <begin position="107"/>
        <end position="109"/>
    </location>
    <ligand>
        <name>UDP-N-acetyl-alpha-D-glucosamine</name>
        <dbReference type="ChEBI" id="CHEBI:57705"/>
    </ligand>
</feature>
<feature type="binding site" evidence="1">
    <location>
        <position position="109"/>
    </location>
    <ligand>
        <name>Mg(2+)</name>
        <dbReference type="ChEBI" id="CHEBI:18420"/>
    </ligand>
</feature>
<feature type="binding site" evidence="1">
    <location>
        <position position="147"/>
    </location>
    <ligand>
        <name>UDP-N-acetyl-alpha-D-glucosamine</name>
        <dbReference type="ChEBI" id="CHEBI:57705"/>
    </ligand>
</feature>
<feature type="binding site" evidence="1">
    <location>
        <position position="162"/>
    </location>
    <ligand>
        <name>UDP-N-acetyl-alpha-D-glucosamine</name>
        <dbReference type="ChEBI" id="CHEBI:57705"/>
    </ligand>
</feature>
<feature type="binding site" evidence="1">
    <location>
        <position position="177"/>
    </location>
    <ligand>
        <name>UDP-N-acetyl-alpha-D-glucosamine</name>
        <dbReference type="ChEBI" id="CHEBI:57705"/>
    </ligand>
</feature>
<feature type="binding site" evidence="1">
    <location>
        <position position="234"/>
    </location>
    <ligand>
        <name>Mg(2+)</name>
        <dbReference type="ChEBI" id="CHEBI:18420"/>
    </ligand>
</feature>
<feature type="binding site" evidence="1">
    <location>
        <position position="234"/>
    </location>
    <ligand>
        <name>UDP-N-acetyl-alpha-D-glucosamine</name>
        <dbReference type="ChEBI" id="CHEBI:57705"/>
    </ligand>
</feature>
<feature type="binding site" evidence="1">
    <location>
        <position position="323"/>
    </location>
    <ligand>
        <name>UDP-N-acetyl-alpha-D-glucosamine</name>
        <dbReference type="ChEBI" id="CHEBI:57705"/>
    </ligand>
</feature>
<feature type="binding site" evidence="1">
    <location>
        <position position="341"/>
    </location>
    <ligand>
        <name>UDP-N-acetyl-alpha-D-glucosamine</name>
        <dbReference type="ChEBI" id="CHEBI:57705"/>
    </ligand>
</feature>
<feature type="binding site" evidence="1">
    <location>
        <position position="356"/>
    </location>
    <ligand>
        <name>UDP-N-acetyl-alpha-D-glucosamine</name>
        <dbReference type="ChEBI" id="CHEBI:57705"/>
    </ligand>
</feature>
<feature type="binding site" evidence="1">
    <location>
        <position position="367"/>
    </location>
    <ligand>
        <name>UDP-N-acetyl-alpha-D-glucosamine</name>
        <dbReference type="ChEBI" id="CHEBI:57705"/>
    </ligand>
</feature>
<feature type="binding site" evidence="1">
    <location>
        <begin position="376"/>
        <end position="377"/>
    </location>
    <ligand>
        <name>acetyl-CoA</name>
        <dbReference type="ChEBI" id="CHEBI:57288"/>
    </ligand>
</feature>
<feature type="binding site" evidence="1">
    <location>
        <position position="395"/>
    </location>
    <ligand>
        <name>acetyl-CoA</name>
        <dbReference type="ChEBI" id="CHEBI:57288"/>
    </ligand>
</feature>
<feature type="binding site" evidence="1">
    <location>
        <position position="413"/>
    </location>
    <ligand>
        <name>acetyl-CoA</name>
        <dbReference type="ChEBI" id="CHEBI:57288"/>
    </ligand>
</feature>
<feature type="binding site" evidence="1">
    <location>
        <position position="430"/>
    </location>
    <ligand>
        <name>acetyl-CoA</name>
        <dbReference type="ChEBI" id="CHEBI:57288"/>
    </ligand>
</feature>
<protein>
    <recommendedName>
        <fullName evidence="1">Bifunctional protein GlmU</fullName>
    </recommendedName>
    <domain>
        <recommendedName>
            <fullName evidence="1">UDP-N-acetylglucosamine pyrophosphorylase</fullName>
            <ecNumber evidence="1">2.7.7.23</ecNumber>
        </recommendedName>
        <alternativeName>
            <fullName evidence="1">N-acetylglucosamine-1-phosphate uridyltransferase</fullName>
        </alternativeName>
    </domain>
    <domain>
        <recommendedName>
            <fullName evidence="1">Glucosamine-1-phosphate N-acetyltransferase</fullName>
            <ecNumber evidence="1">2.3.1.157</ecNumber>
        </recommendedName>
    </domain>
</protein>
<organism>
    <name type="scientific">Zymomonas mobilis subsp. mobilis (strain ATCC 31821 / ZM4 / CP4)</name>
    <dbReference type="NCBI Taxonomy" id="264203"/>
    <lineage>
        <taxon>Bacteria</taxon>
        <taxon>Pseudomonadati</taxon>
        <taxon>Pseudomonadota</taxon>
        <taxon>Alphaproteobacteria</taxon>
        <taxon>Sphingomonadales</taxon>
        <taxon>Zymomonadaceae</taxon>
        <taxon>Zymomonas</taxon>
    </lineage>
</organism>
<reference key="1">
    <citation type="journal article" date="2005" name="Nat. Biotechnol.">
        <title>The genome sequence of the ethanologenic bacterium Zymomonas mobilis ZM4.</title>
        <authorList>
            <person name="Seo J.-S."/>
            <person name="Chong H."/>
            <person name="Park H.S."/>
            <person name="Yoon K.-O."/>
            <person name="Jung C."/>
            <person name="Kim J.J."/>
            <person name="Hong J.H."/>
            <person name="Kim H."/>
            <person name="Kim J.-H."/>
            <person name="Kil J.-I."/>
            <person name="Park C.J."/>
            <person name="Oh H.-M."/>
            <person name="Lee J.-S."/>
            <person name="Jin S.-J."/>
            <person name="Um H.-W."/>
            <person name="Lee H.-J."/>
            <person name="Oh S.-J."/>
            <person name="Kim J.Y."/>
            <person name="Kang H.L."/>
            <person name="Lee S.Y."/>
            <person name="Lee K.J."/>
            <person name="Kang H.S."/>
        </authorList>
    </citation>
    <scope>NUCLEOTIDE SEQUENCE [LARGE SCALE GENOMIC DNA]</scope>
    <source>
        <strain>ATCC 31821 / ZM4 / CP4</strain>
    </source>
</reference>
<sequence length="450" mass="49103">MTAHKPFSAVILAAGKGTRMRSDTHKILHALAGRPLLGWVLDSLAPLSPDHTVVVTGSGREQVENYLKQVDLPVTSVTQEEQLGTAHAVAQAKSALKDFKGDIVVLYGDVPLVQPKTIKALLERLHHEDKPTVAVLAFRPDDPRQYGRIVTDKTAHIQKMVEYKDASEEERAITLCNSGLLAIRAHDLWPLLSRVQNNNASGEYYLPDIVMLALSEGRQAVTVDAEAWEVSGVNNRAELASLESLWQNRKRQDVMKDGASLIAPETVWFSYDTEIGRDVIIEPQVYFGRNVKVANGVTIHSFSHIEGADIKENVEIGPFARLRPGAEIAEKAKIGNFVEIKKSKIEKGAKVNHLTYIGDATIGAGSNIGGGTITCNYDGFNKSRTEIGEKAFIGSNSALVAPVRIGAGAIIAAGSTITHNVPDDSLAIARSEQENKALWAKKFRQRKKKK</sequence>
<name>GLMU_ZYMMO</name>
<evidence type="ECO:0000255" key="1">
    <source>
        <dbReference type="HAMAP-Rule" id="MF_01631"/>
    </source>
</evidence>